<reference key="1">
    <citation type="journal article" date="2005" name="PLoS Biol.">
        <title>The genomes of Oryza sativa: a history of duplications.</title>
        <authorList>
            <person name="Yu J."/>
            <person name="Wang J."/>
            <person name="Lin W."/>
            <person name="Li S."/>
            <person name="Li H."/>
            <person name="Zhou J."/>
            <person name="Ni P."/>
            <person name="Dong W."/>
            <person name="Hu S."/>
            <person name="Zeng C."/>
            <person name="Zhang J."/>
            <person name="Zhang Y."/>
            <person name="Li R."/>
            <person name="Xu Z."/>
            <person name="Li S."/>
            <person name="Li X."/>
            <person name="Zheng H."/>
            <person name="Cong L."/>
            <person name="Lin L."/>
            <person name="Yin J."/>
            <person name="Geng J."/>
            <person name="Li G."/>
            <person name="Shi J."/>
            <person name="Liu J."/>
            <person name="Lv H."/>
            <person name="Li J."/>
            <person name="Wang J."/>
            <person name="Deng Y."/>
            <person name="Ran L."/>
            <person name="Shi X."/>
            <person name="Wang X."/>
            <person name="Wu Q."/>
            <person name="Li C."/>
            <person name="Ren X."/>
            <person name="Wang J."/>
            <person name="Wang X."/>
            <person name="Li D."/>
            <person name="Liu D."/>
            <person name="Zhang X."/>
            <person name="Ji Z."/>
            <person name="Zhao W."/>
            <person name="Sun Y."/>
            <person name="Zhang Z."/>
            <person name="Bao J."/>
            <person name="Han Y."/>
            <person name="Dong L."/>
            <person name="Ji J."/>
            <person name="Chen P."/>
            <person name="Wu S."/>
            <person name="Liu J."/>
            <person name="Xiao Y."/>
            <person name="Bu D."/>
            <person name="Tan J."/>
            <person name="Yang L."/>
            <person name="Ye C."/>
            <person name="Zhang J."/>
            <person name="Xu J."/>
            <person name="Zhou Y."/>
            <person name="Yu Y."/>
            <person name="Zhang B."/>
            <person name="Zhuang S."/>
            <person name="Wei H."/>
            <person name="Liu B."/>
            <person name="Lei M."/>
            <person name="Yu H."/>
            <person name="Li Y."/>
            <person name="Xu H."/>
            <person name="Wei S."/>
            <person name="He X."/>
            <person name="Fang L."/>
            <person name="Zhang Z."/>
            <person name="Zhang Y."/>
            <person name="Huang X."/>
            <person name="Su Z."/>
            <person name="Tong W."/>
            <person name="Li J."/>
            <person name="Tong Z."/>
            <person name="Li S."/>
            <person name="Ye J."/>
            <person name="Wang L."/>
            <person name="Fang L."/>
            <person name="Lei T."/>
            <person name="Chen C.-S."/>
            <person name="Chen H.-C."/>
            <person name="Xu Z."/>
            <person name="Li H."/>
            <person name="Huang H."/>
            <person name="Zhang F."/>
            <person name="Xu H."/>
            <person name="Li N."/>
            <person name="Zhao C."/>
            <person name="Li S."/>
            <person name="Dong L."/>
            <person name="Huang Y."/>
            <person name="Li L."/>
            <person name="Xi Y."/>
            <person name="Qi Q."/>
            <person name="Li W."/>
            <person name="Zhang B."/>
            <person name="Hu W."/>
            <person name="Zhang Y."/>
            <person name="Tian X."/>
            <person name="Jiao Y."/>
            <person name="Liang X."/>
            <person name="Jin J."/>
            <person name="Gao L."/>
            <person name="Zheng W."/>
            <person name="Hao B."/>
            <person name="Liu S.-M."/>
            <person name="Wang W."/>
            <person name="Yuan L."/>
            <person name="Cao M."/>
            <person name="McDermott J."/>
            <person name="Samudrala R."/>
            <person name="Wang J."/>
            <person name="Wong G.K.-S."/>
            <person name="Yang H."/>
        </authorList>
    </citation>
    <scope>NUCLEOTIDE SEQUENCE [LARGE SCALE GENOMIC DNA]</scope>
    <source>
        <strain>cv. 93-11</strain>
    </source>
</reference>
<name>H2B4_ORYSI</name>
<evidence type="ECO:0000250" key="1"/>
<evidence type="ECO:0000256" key="2">
    <source>
        <dbReference type="SAM" id="MobiDB-lite"/>
    </source>
</evidence>
<evidence type="ECO:0000305" key="3"/>
<dbReference type="EMBL" id="CM000126">
    <property type="protein sequence ID" value="EAY72541.1"/>
    <property type="molecule type" value="Genomic_DNA"/>
</dbReference>
<dbReference type="PDB" id="8Q15">
    <property type="method" value="EM"/>
    <property type="resolution" value="3.60 A"/>
    <property type="chains" value="C/D=1-153"/>
</dbReference>
<dbReference type="PDB" id="8Q16">
    <property type="method" value="EM"/>
    <property type="resolution" value="3.60 A"/>
    <property type="chains" value="C/D=1-153"/>
</dbReference>
<dbReference type="PDBsum" id="8Q15"/>
<dbReference type="PDBsum" id="8Q16"/>
<dbReference type="EMDB" id="EMD-18060"/>
<dbReference type="EMDB" id="EMD-18061"/>
<dbReference type="SMR" id="A2WKP5"/>
<dbReference type="STRING" id="39946.A2WKP5"/>
<dbReference type="EnsemblPlants" id="BGIOSGA002785-TA">
    <property type="protein sequence ID" value="BGIOSGA002785-PA"/>
    <property type="gene ID" value="BGIOSGA002785"/>
</dbReference>
<dbReference type="EnsemblPlants" id="OsGoSa_01g0003440.01">
    <property type="protein sequence ID" value="OsGoSa_01g0003440.01"/>
    <property type="gene ID" value="OsGoSa_01g0003440"/>
</dbReference>
<dbReference type="EnsemblPlants" id="OsLaMu_01g0003340.01">
    <property type="protein sequence ID" value="OsLaMu_01g0003340.01"/>
    <property type="gene ID" value="OsLaMu_01g0003340"/>
</dbReference>
<dbReference type="EnsemblPlants" id="OsLima_01g0003190.01">
    <property type="protein sequence ID" value="OsLima_01g0003190.01"/>
    <property type="gene ID" value="OsLima_01g0003190"/>
</dbReference>
<dbReference type="EnsemblPlants" id="OsLiXu_Ung0005240.01">
    <property type="protein sequence ID" value="OsLiXu_Ung0005240.01"/>
    <property type="gene ID" value="OsLiXu_Ung0005240"/>
</dbReference>
<dbReference type="EnsemblPlants" id="OsMH63_01G003570_01">
    <property type="protein sequence ID" value="OsMH63_01G003570_01"/>
    <property type="gene ID" value="OsMH63_01G003570"/>
</dbReference>
<dbReference type="EnsemblPlants" id="OsPr106_01g0003450.01">
    <property type="protein sequence ID" value="OsPr106_01g0003450.01"/>
    <property type="gene ID" value="OsPr106_01g0003450"/>
</dbReference>
<dbReference type="EnsemblPlants" id="OsZS97_01G003320_01">
    <property type="protein sequence ID" value="OsZS97_01G003320_01"/>
    <property type="gene ID" value="OsZS97_01G003320"/>
</dbReference>
<dbReference type="Gramene" id="BGIOSGA002785-TA">
    <property type="protein sequence ID" value="BGIOSGA002785-PA"/>
    <property type="gene ID" value="BGIOSGA002785"/>
</dbReference>
<dbReference type="Gramene" id="OsGoSa_01g0003440.01">
    <property type="protein sequence ID" value="OsGoSa_01g0003440.01"/>
    <property type="gene ID" value="OsGoSa_01g0003440"/>
</dbReference>
<dbReference type="Gramene" id="OsLaMu_01g0003340.01">
    <property type="protein sequence ID" value="OsLaMu_01g0003340.01"/>
    <property type="gene ID" value="OsLaMu_01g0003340"/>
</dbReference>
<dbReference type="Gramene" id="OsLima_01g0003190.01">
    <property type="protein sequence ID" value="OsLima_01g0003190.01"/>
    <property type="gene ID" value="OsLima_01g0003190"/>
</dbReference>
<dbReference type="Gramene" id="OsLiXu_Ung0005240.01">
    <property type="protein sequence ID" value="OsLiXu_Ung0005240.01"/>
    <property type="gene ID" value="OsLiXu_Ung0005240"/>
</dbReference>
<dbReference type="Gramene" id="OsMH63_01G003570_01">
    <property type="protein sequence ID" value="OsMH63_01G003570_01"/>
    <property type="gene ID" value="OsMH63_01G003570"/>
</dbReference>
<dbReference type="Gramene" id="OsPr106_01g0003450.01">
    <property type="protein sequence ID" value="OsPr106_01g0003450.01"/>
    <property type="gene ID" value="OsPr106_01g0003450"/>
</dbReference>
<dbReference type="Gramene" id="OsZS97_01G003320_01">
    <property type="protein sequence ID" value="OsZS97_01G003320_01"/>
    <property type="gene ID" value="OsZS97_01G003320"/>
</dbReference>
<dbReference type="HOGENOM" id="CLU_075666_1_0_1"/>
<dbReference type="OMA" id="TRSCCEP"/>
<dbReference type="OrthoDB" id="10254238at2759"/>
<dbReference type="Proteomes" id="UP000007015">
    <property type="component" value="Chromosome 1"/>
</dbReference>
<dbReference type="GO" id="GO:0000786">
    <property type="term" value="C:nucleosome"/>
    <property type="evidence" value="ECO:0007669"/>
    <property type="project" value="UniProtKB-KW"/>
</dbReference>
<dbReference type="GO" id="GO:0005634">
    <property type="term" value="C:nucleus"/>
    <property type="evidence" value="ECO:0007669"/>
    <property type="project" value="UniProtKB-SubCell"/>
</dbReference>
<dbReference type="GO" id="GO:0003677">
    <property type="term" value="F:DNA binding"/>
    <property type="evidence" value="ECO:0007669"/>
    <property type="project" value="UniProtKB-KW"/>
</dbReference>
<dbReference type="GO" id="GO:0046982">
    <property type="term" value="F:protein heterodimerization activity"/>
    <property type="evidence" value="ECO:0007669"/>
    <property type="project" value="InterPro"/>
</dbReference>
<dbReference type="GO" id="GO:0030527">
    <property type="term" value="F:structural constituent of chromatin"/>
    <property type="evidence" value="ECO:0007669"/>
    <property type="project" value="InterPro"/>
</dbReference>
<dbReference type="CDD" id="cd22910">
    <property type="entry name" value="HFD_H2B"/>
    <property type="match status" value="1"/>
</dbReference>
<dbReference type="FunFam" id="1.10.20.10:FF:000014">
    <property type="entry name" value="Histone H2B"/>
    <property type="match status" value="1"/>
</dbReference>
<dbReference type="Gene3D" id="1.10.20.10">
    <property type="entry name" value="Histone, subunit A"/>
    <property type="match status" value="1"/>
</dbReference>
<dbReference type="InterPro" id="IPR009072">
    <property type="entry name" value="Histone-fold"/>
</dbReference>
<dbReference type="InterPro" id="IPR007125">
    <property type="entry name" value="Histone_H2A/H2B/H3"/>
</dbReference>
<dbReference type="InterPro" id="IPR000558">
    <property type="entry name" value="Histone_H2B"/>
</dbReference>
<dbReference type="InterPro" id="IPR055333">
    <property type="entry name" value="HISTONE_H2B_site"/>
</dbReference>
<dbReference type="PANTHER" id="PTHR23428">
    <property type="entry name" value="HISTONE H2B"/>
    <property type="match status" value="1"/>
</dbReference>
<dbReference type="Pfam" id="PF00125">
    <property type="entry name" value="Histone"/>
    <property type="match status" value="1"/>
</dbReference>
<dbReference type="PRINTS" id="PR00621">
    <property type="entry name" value="HISTONEH2B"/>
</dbReference>
<dbReference type="SMART" id="SM00427">
    <property type="entry name" value="H2B"/>
    <property type="match status" value="1"/>
</dbReference>
<dbReference type="SUPFAM" id="SSF47113">
    <property type="entry name" value="Histone-fold"/>
    <property type="match status" value="1"/>
</dbReference>
<dbReference type="PROSITE" id="PS00357">
    <property type="entry name" value="HISTONE_H2B"/>
    <property type="match status" value="1"/>
</dbReference>
<proteinExistence type="evidence at protein level"/>
<organism>
    <name type="scientific">Oryza sativa subsp. indica</name>
    <name type="common">Rice</name>
    <dbReference type="NCBI Taxonomy" id="39946"/>
    <lineage>
        <taxon>Eukaryota</taxon>
        <taxon>Viridiplantae</taxon>
        <taxon>Streptophyta</taxon>
        <taxon>Embryophyta</taxon>
        <taxon>Tracheophyta</taxon>
        <taxon>Spermatophyta</taxon>
        <taxon>Magnoliopsida</taxon>
        <taxon>Liliopsida</taxon>
        <taxon>Poales</taxon>
        <taxon>Poaceae</taxon>
        <taxon>BOP clade</taxon>
        <taxon>Oryzoideae</taxon>
        <taxon>Oryzeae</taxon>
        <taxon>Oryzinae</taxon>
        <taxon>Oryza</taxon>
        <taxon>Oryza sativa</taxon>
    </lineage>
</organism>
<feature type="initiator methionine" description="Removed" evidence="1">
    <location>
        <position position="1"/>
    </location>
</feature>
<feature type="chain" id="PRO_0000294182" description="Histone H2B.4">
    <location>
        <begin position="2"/>
        <end position="153"/>
    </location>
</feature>
<feature type="region of interest" description="Disordered" evidence="2">
    <location>
        <begin position="1"/>
        <end position="61"/>
    </location>
</feature>
<feature type="compositionally biased region" description="Basic and acidic residues" evidence="2">
    <location>
        <begin position="1"/>
        <end position="28"/>
    </location>
</feature>
<feature type="compositionally biased region" description="Basic and acidic residues" evidence="2">
    <location>
        <begin position="36"/>
        <end position="53"/>
    </location>
</feature>
<feature type="modified residue" description="N6-acetyllysine" evidence="1">
    <location>
        <position position="7"/>
    </location>
</feature>
<feature type="modified residue" description="N6-acetyllysine" evidence="1">
    <location>
        <position position="37"/>
    </location>
</feature>
<feature type="cross-link" description="Glycyl lysine isopeptide (Lys-Gly) (interchain with G-Cter in ubiquitin)" evidence="1">
    <location>
        <position position="149"/>
    </location>
</feature>
<accession>A2WKP5</accession>
<gene>
    <name type="primary">H2B.4</name>
    <name type="ORF">OsI_000388</name>
</gene>
<comment type="function">
    <text>Core component of nucleosome. Nucleosomes wrap and compact DNA into chromatin, limiting DNA accessibility to the cellular machineries which require DNA as a template. Histones thereby play a central role in transcription regulation, DNA repair, DNA replication and chromosomal stability. DNA accessibility is regulated via a complex set of post-translational modifications of histones, also called histone code, and nucleosome remodeling.</text>
</comment>
<comment type="subunit">
    <text>The nucleosome is a histone octamer containing two molecules each of H2A, H2B, H3 and H4 assembled in one H3-H4 heterotetramer and two H2A-H2B heterodimers. The octamer wraps approximately 147 bp of DNA.</text>
</comment>
<comment type="subcellular location">
    <subcellularLocation>
        <location evidence="1">Nucleus</location>
    </subcellularLocation>
    <subcellularLocation>
        <location evidence="1">Chromosome</location>
    </subcellularLocation>
</comment>
<comment type="PTM">
    <text evidence="1">Can be acetylated to form H2BK6ac and H2BK33ac.</text>
</comment>
<comment type="PTM">
    <text evidence="1">Monoubiquitinated by BRE1 to form H2BK143ub1 and deubiquitinated by UBP26. Required for heterochromatic histone H3 di- and trimethylation at H3K4me. May give a specific tag for epigenetic transcriptional activation (By similarity).</text>
</comment>
<comment type="similarity">
    <text evidence="3">Belongs to the histone H2B family.</text>
</comment>
<comment type="caution">
    <text evidence="3">To ensure consistency between histone entries, we follow the 'Brno' nomenclature for histone modifications, with positions referring to those used in the literature for the 'closest' model organism. Due to slight variations in histone sequences between organisms and to the presence of initiator methionine in UniProtKB/Swiss-Prot sequences, the actual positions of modified amino acids in the sequence generally differ. In this entry the following conventions are used: H2BK6ac = acetylated Lys-7; H2BK33ac = acetylated Lys-37; H2BK143ub1 = monoubiquitinated Lys-149.</text>
</comment>
<sequence>MAPKAEKKPAAKKPAEEEPAAEKAEKAPAGKKPKAEKRLPAGKAEKGSGEGKKAGRKKAKKSVETYKIYIFKVLKQVHPDIGISSKAMSIMNSFINDIFEKLAGESAKLARYNKKPTITSREIQTSVRLVLPGELAKHAVSEGTKAVTKFTSA</sequence>
<keyword id="KW-0002">3D-structure</keyword>
<keyword id="KW-0007">Acetylation</keyword>
<keyword id="KW-0158">Chromosome</keyword>
<keyword id="KW-0238">DNA-binding</keyword>
<keyword id="KW-1017">Isopeptide bond</keyword>
<keyword id="KW-0544">Nucleosome core</keyword>
<keyword id="KW-0539">Nucleus</keyword>
<keyword id="KW-1185">Reference proteome</keyword>
<keyword id="KW-0832">Ubl conjugation</keyword>
<protein>
    <recommendedName>
        <fullName>Histone H2B.4</fullName>
    </recommendedName>
</protein>